<name>PDLI3_PIG</name>
<dbReference type="EMBL" id="AY543095">
    <property type="protein sequence ID" value="AAS55866.1"/>
    <property type="molecule type" value="mRNA"/>
</dbReference>
<dbReference type="RefSeq" id="NP_001001637.1">
    <property type="nucleotide sequence ID" value="NM_001001637.1"/>
</dbReference>
<dbReference type="SMR" id="Q6QGC0"/>
<dbReference type="FunCoup" id="Q6QGC0">
    <property type="interactions" value="139"/>
</dbReference>
<dbReference type="STRING" id="9823.ENSSSCP00000016738"/>
<dbReference type="GlyGen" id="Q6QGC0">
    <property type="glycosylation" value="1 site"/>
</dbReference>
<dbReference type="PaxDb" id="9823-ENSSSCP00000016738"/>
<dbReference type="PeptideAtlas" id="Q6QGC0"/>
<dbReference type="Ensembl" id="ENSSSCT00000017199.4">
    <property type="protein sequence ID" value="ENSSSCP00000016738.2"/>
    <property type="gene ID" value="ENSSSCG00000015796.5"/>
</dbReference>
<dbReference type="Ensembl" id="ENSSSCT00015040998.1">
    <property type="protein sequence ID" value="ENSSSCP00015016205.1"/>
    <property type="gene ID" value="ENSSSCG00015030376.1"/>
</dbReference>
<dbReference type="Ensembl" id="ENSSSCT00025049163.1">
    <property type="protein sequence ID" value="ENSSSCP00025021020.1"/>
    <property type="gene ID" value="ENSSSCG00025036042.1"/>
</dbReference>
<dbReference type="Ensembl" id="ENSSSCT00030103959.1">
    <property type="protein sequence ID" value="ENSSSCP00030048109.1"/>
    <property type="gene ID" value="ENSSSCG00030074128.1"/>
</dbReference>
<dbReference type="Ensembl" id="ENSSSCT00035018380.1">
    <property type="protein sequence ID" value="ENSSSCP00035006422.1"/>
    <property type="gene ID" value="ENSSSCG00035014492.1"/>
</dbReference>
<dbReference type="Ensembl" id="ENSSSCT00040046658.1">
    <property type="protein sequence ID" value="ENSSSCP00040019555.1"/>
    <property type="gene ID" value="ENSSSCG00040034605.1"/>
</dbReference>
<dbReference type="Ensembl" id="ENSSSCT00050027919.1">
    <property type="protein sequence ID" value="ENSSSCP00050011546.1"/>
    <property type="gene ID" value="ENSSSCG00050020686.1"/>
</dbReference>
<dbReference type="Ensembl" id="ENSSSCT00055030210.1">
    <property type="protein sequence ID" value="ENSSSCP00055024065.1"/>
    <property type="gene ID" value="ENSSSCG00055015298.1"/>
</dbReference>
<dbReference type="Ensembl" id="ENSSSCT00060084157.1">
    <property type="protein sequence ID" value="ENSSSCP00060036458.1"/>
    <property type="gene ID" value="ENSSSCG00060060611.1"/>
</dbReference>
<dbReference type="Ensembl" id="ENSSSCT00060084186.1">
    <property type="protein sequence ID" value="ENSSSCP00060036471.1"/>
    <property type="gene ID" value="ENSSSCG00060060611.1"/>
</dbReference>
<dbReference type="Ensembl" id="ENSSSCT00065093889.1">
    <property type="protein sequence ID" value="ENSSSCP00065041086.1"/>
    <property type="gene ID" value="ENSSSCG00065068360.1"/>
</dbReference>
<dbReference type="Ensembl" id="ENSSSCT00070054507.1">
    <property type="protein sequence ID" value="ENSSSCP00070046233.1"/>
    <property type="gene ID" value="ENSSSCG00070027183.1"/>
</dbReference>
<dbReference type="Ensembl" id="ENSSSCT00085051666">
    <property type="protein sequence ID" value="ENSSSCP00085036178"/>
    <property type="gene ID" value="ENSSSCG00085026886"/>
</dbReference>
<dbReference type="Ensembl" id="ENSSSCT00105037220">
    <property type="protein sequence ID" value="ENSSSCP00105025833"/>
    <property type="gene ID" value="ENSSSCG00105019330"/>
</dbReference>
<dbReference type="Ensembl" id="ENSSSCT00110069555">
    <property type="protein sequence ID" value="ENSSSCP00110048973"/>
    <property type="gene ID" value="ENSSSCG00110036517"/>
</dbReference>
<dbReference type="Ensembl" id="ENSSSCT00115000288">
    <property type="protein sequence ID" value="ENSSSCP00115000243"/>
    <property type="gene ID" value="ENSSSCG00115000215"/>
</dbReference>
<dbReference type="Ensembl" id="ENSSSCT00130051487">
    <property type="protein sequence ID" value="ENSSSCP00130036611"/>
    <property type="gene ID" value="ENSSSCG00130026355"/>
</dbReference>
<dbReference type="GeneID" id="414421"/>
<dbReference type="KEGG" id="ssc:414421"/>
<dbReference type="CTD" id="27295"/>
<dbReference type="VGNC" id="VGNC:95945">
    <property type="gene designation" value="PDLIM3"/>
</dbReference>
<dbReference type="eggNOG" id="KOG1703">
    <property type="taxonomic scope" value="Eukaryota"/>
</dbReference>
<dbReference type="GeneTree" id="ENSGT00940000156741"/>
<dbReference type="InParanoid" id="Q6QGC0"/>
<dbReference type="OrthoDB" id="1293114at2759"/>
<dbReference type="TreeFam" id="TF106408"/>
<dbReference type="Proteomes" id="UP000008227">
    <property type="component" value="Chromosome 15"/>
</dbReference>
<dbReference type="Proteomes" id="UP000314985">
    <property type="component" value="Chromosome 15"/>
</dbReference>
<dbReference type="Proteomes" id="UP000694570">
    <property type="component" value="Unplaced"/>
</dbReference>
<dbReference type="Proteomes" id="UP000694571">
    <property type="component" value="Unplaced"/>
</dbReference>
<dbReference type="Proteomes" id="UP000694720">
    <property type="component" value="Unplaced"/>
</dbReference>
<dbReference type="Proteomes" id="UP000694722">
    <property type="component" value="Unplaced"/>
</dbReference>
<dbReference type="Proteomes" id="UP000694723">
    <property type="component" value="Unplaced"/>
</dbReference>
<dbReference type="Proteomes" id="UP000694724">
    <property type="component" value="Unplaced"/>
</dbReference>
<dbReference type="Proteomes" id="UP000694725">
    <property type="component" value="Unplaced"/>
</dbReference>
<dbReference type="Proteomes" id="UP000694726">
    <property type="component" value="Unplaced"/>
</dbReference>
<dbReference type="Proteomes" id="UP000694727">
    <property type="component" value="Unplaced"/>
</dbReference>
<dbReference type="Proteomes" id="UP000694728">
    <property type="component" value="Unplaced"/>
</dbReference>
<dbReference type="Bgee" id="ENSSSCG00000015796">
    <property type="expression patterns" value="Expressed in muscle tissue and 44 other cell types or tissues"/>
</dbReference>
<dbReference type="ExpressionAtlas" id="Q6QGC0">
    <property type="expression patterns" value="baseline and differential"/>
</dbReference>
<dbReference type="GO" id="GO:0005912">
    <property type="term" value="C:adherens junction"/>
    <property type="evidence" value="ECO:0000318"/>
    <property type="project" value="GO_Central"/>
</dbReference>
<dbReference type="GO" id="GO:0005829">
    <property type="term" value="C:cytosol"/>
    <property type="evidence" value="ECO:0007669"/>
    <property type="project" value="Ensembl"/>
</dbReference>
<dbReference type="GO" id="GO:0031941">
    <property type="term" value="C:filamentous actin"/>
    <property type="evidence" value="ECO:0000318"/>
    <property type="project" value="GO_Central"/>
</dbReference>
<dbReference type="GO" id="GO:0001725">
    <property type="term" value="C:stress fiber"/>
    <property type="evidence" value="ECO:0000318"/>
    <property type="project" value="GO_Central"/>
</dbReference>
<dbReference type="GO" id="GO:0030018">
    <property type="term" value="C:Z disc"/>
    <property type="evidence" value="ECO:0000318"/>
    <property type="project" value="GO_Central"/>
</dbReference>
<dbReference type="GO" id="GO:0003779">
    <property type="term" value="F:actin binding"/>
    <property type="evidence" value="ECO:0000318"/>
    <property type="project" value="GO_Central"/>
</dbReference>
<dbReference type="GO" id="GO:0046872">
    <property type="term" value="F:metal ion binding"/>
    <property type="evidence" value="ECO:0007669"/>
    <property type="project" value="UniProtKB-KW"/>
</dbReference>
<dbReference type="GO" id="GO:0051371">
    <property type="term" value="F:muscle alpha-actinin binding"/>
    <property type="evidence" value="ECO:0000318"/>
    <property type="project" value="GO_Central"/>
</dbReference>
<dbReference type="GO" id="GO:0008307">
    <property type="term" value="F:structural constituent of muscle"/>
    <property type="evidence" value="ECO:0007669"/>
    <property type="project" value="Ensembl"/>
</dbReference>
<dbReference type="GO" id="GO:0030036">
    <property type="term" value="P:actin cytoskeleton organization"/>
    <property type="evidence" value="ECO:0000318"/>
    <property type="project" value="GO_Central"/>
</dbReference>
<dbReference type="GO" id="GO:0007015">
    <property type="term" value="P:actin filament organization"/>
    <property type="evidence" value="ECO:0007669"/>
    <property type="project" value="Ensembl"/>
</dbReference>
<dbReference type="GO" id="GO:0007507">
    <property type="term" value="P:heart development"/>
    <property type="evidence" value="ECO:0000318"/>
    <property type="project" value="GO_Central"/>
</dbReference>
<dbReference type="GO" id="GO:0061061">
    <property type="term" value="P:muscle structure development"/>
    <property type="evidence" value="ECO:0000318"/>
    <property type="project" value="GO_Central"/>
</dbReference>
<dbReference type="CDD" id="cd09450">
    <property type="entry name" value="LIM_ALP"/>
    <property type="match status" value="1"/>
</dbReference>
<dbReference type="CDD" id="cd06753">
    <property type="entry name" value="PDZ_PDLIM-like"/>
    <property type="match status" value="1"/>
</dbReference>
<dbReference type="FunFam" id="2.10.110.10:FF:000026">
    <property type="entry name" value="PDZ and LIM domain protein 3"/>
    <property type="match status" value="1"/>
</dbReference>
<dbReference type="FunFam" id="2.30.42.10:FF:000055">
    <property type="entry name" value="PDZ and LIM domain protein 3"/>
    <property type="match status" value="1"/>
</dbReference>
<dbReference type="Gene3D" id="2.30.42.10">
    <property type="match status" value="1"/>
</dbReference>
<dbReference type="Gene3D" id="2.10.110.10">
    <property type="entry name" value="Cysteine Rich Protein"/>
    <property type="match status" value="1"/>
</dbReference>
<dbReference type="InterPro" id="IPR031847">
    <property type="entry name" value="PDLI1-4/Zasp-like_mid"/>
</dbReference>
<dbReference type="InterPro" id="IPR001478">
    <property type="entry name" value="PDZ"/>
</dbReference>
<dbReference type="InterPro" id="IPR050604">
    <property type="entry name" value="PDZ-LIM_domain"/>
</dbReference>
<dbReference type="InterPro" id="IPR036034">
    <property type="entry name" value="PDZ_sf"/>
</dbReference>
<dbReference type="InterPro" id="IPR006643">
    <property type="entry name" value="Zasp-like_motif"/>
</dbReference>
<dbReference type="InterPro" id="IPR001781">
    <property type="entry name" value="Znf_LIM"/>
</dbReference>
<dbReference type="PANTHER" id="PTHR24214:SF7">
    <property type="entry name" value="PDZ AND LIM DOMAIN PROTEIN 3"/>
    <property type="match status" value="1"/>
</dbReference>
<dbReference type="PANTHER" id="PTHR24214">
    <property type="entry name" value="PDZ AND LIM DOMAIN PROTEIN ZASP"/>
    <property type="match status" value="1"/>
</dbReference>
<dbReference type="Pfam" id="PF15936">
    <property type="entry name" value="DUF4749"/>
    <property type="match status" value="1"/>
</dbReference>
<dbReference type="Pfam" id="PF00412">
    <property type="entry name" value="LIM"/>
    <property type="match status" value="1"/>
</dbReference>
<dbReference type="Pfam" id="PF00595">
    <property type="entry name" value="PDZ"/>
    <property type="match status" value="1"/>
</dbReference>
<dbReference type="SMART" id="SM00132">
    <property type="entry name" value="LIM"/>
    <property type="match status" value="1"/>
</dbReference>
<dbReference type="SMART" id="SM00228">
    <property type="entry name" value="PDZ"/>
    <property type="match status" value="1"/>
</dbReference>
<dbReference type="SMART" id="SM00735">
    <property type="entry name" value="ZM"/>
    <property type="match status" value="1"/>
</dbReference>
<dbReference type="SUPFAM" id="SSF57716">
    <property type="entry name" value="Glucocorticoid receptor-like (DNA-binding domain)"/>
    <property type="match status" value="2"/>
</dbReference>
<dbReference type="SUPFAM" id="SSF50156">
    <property type="entry name" value="PDZ domain-like"/>
    <property type="match status" value="1"/>
</dbReference>
<dbReference type="PROSITE" id="PS00478">
    <property type="entry name" value="LIM_DOMAIN_1"/>
    <property type="match status" value="1"/>
</dbReference>
<dbReference type="PROSITE" id="PS50023">
    <property type="entry name" value="LIM_DOMAIN_2"/>
    <property type="match status" value="1"/>
</dbReference>
<dbReference type="PROSITE" id="PS50106">
    <property type="entry name" value="PDZ"/>
    <property type="match status" value="1"/>
</dbReference>
<accession>Q6QGC0</accession>
<reference key="1">
    <citation type="submission" date="2004-02" db="EMBL/GenBank/DDBJ databases">
        <title>The cloning and expression of alpha-actinin-2-associated LIM protein gene in pig.</title>
        <authorList>
            <person name="Tian X."/>
            <person name="Li J."/>
            <person name="Wang C."/>
            <person name="Chen Y."/>
        </authorList>
    </citation>
    <scope>NUCLEOTIDE SEQUENCE [MRNA]</scope>
    <source>
        <tissue>Longissimus dorsi muscle</tissue>
    </source>
</reference>
<sequence>MPQNVILPGPAPWGFRLSGGIDFNQPLIITRITPGSKAAAANLCPGDVILAIDGYGTESMTHADAQDRIKAAAHQLCLKIDRAETRLWSPQVTEDGKAHPFKINLESEPQDVNYFEHKHNIRPKPFIIPGRSSGCSTPSGIDGGSGRSTPSSVSTLSTICPGDLKVAAKMAPNIPLEMELPGVKIVHAQFNTPMQLYSDDNIMETLQGQVSTALGETPSMSEPTTASVPPQSDVYRMLHDNRNEPTQPRQSGSFRVLQELVNDGPDDRPAGTRSVRAPVTKIHGGAGGTQKMPLCDKCGSGIVGAVVKARDKYRHPECFVCADCNLNLKQKGYFFVEGELYCETHARARMRPPEGYDTVTLYPKA</sequence>
<comment type="function">
    <text evidence="1">May play a role in the organization of actin filament arrays within muscle cells.</text>
</comment>
<comment type="subunit">
    <text evidence="2 3">Interacts with ACTN2 (By similarity). Forms a heterodimer with PDLIM4 (via LIM domain) (By similarity).</text>
</comment>
<comment type="subcellular location">
    <subcellularLocation>
        <location evidence="1">Cytoplasm</location>
        <location evidence="1">Myofibril</location>
        <location evidence="1">Sarcomere</location>
        <location evidence="1">Z line</location>
    </subcellularLocation>
    <text evidence="1">Localizes to myofiber Z-lines.</text>
</comment>
<proteinExistence type="evidence at transcript level"/>
<protein>
    <recommendedName>
        <fullName>PDZ and LIM domain protein 3</fullName>
    </recommendedName>
    <alternativeName>
        <fullName>Actinin-associated LIM protein</fullName>
    </alternativeName>
    <alternativeName>
        <fullName>Alpha-actinin-2-associated LIM protein</fullName>
    </alternativeName>
</protein>
<gene>
    <name type="primary">PDLIM3</name>
</gene>
<evidence type="ECO:0000250" key="1"/>
<evidence type="ECO:0000250" key="2">
    <source>
        <dbReference type="UniProtKB" id="O70209"/>
    </source>
</evidence>
<evidence type="ECO:0000250" key="3">
    <source>
        <dbReference type="UniProtKB" id="Q66HS7"/>
    </source>
</evidence>
<evidence type="ECO:0000255" key="4">
    <source>
        <dbReference type="PROSITE-ProRule" id="PRU00125"/>
    </source>
</evidence>
<evidence type="ECO:0000255" key="5">
    <source>
        <dbReference type="PROSITE-ProRule" id="PRU00143"/>
    </source>
</evidence>
<evidence type="ECO:0000256" key="6">
    <source>
        <dbReference type="SAM" id="MobiDB-lite"/>
    </source>
</evidence>
<feature type="chain" id="PRO_0000075869" description="PDZ and LIM domain protein 3">
    <location>
        <begin position="1"/>
        <end position="365"/>
    </location>
</feature>
<feature type="domain" description="PDZ" evidence="5">
    <location>
        <begin position="1"/>
        <end position="84"/>
    </location>
</feature>
<feature type="domain" description="LIM zinc-binding" evidence="4">
    <location>
        <begin position="293"/>
        <end position="352"/>
    </location>
</feature>
<feature type="region of interest" description="Disordered" evidence="6">
    <location>
        <begin position="126"/>
        <end position="156"/>
    </location>
</feature>
<feature type="compositionally biased region" description="Polar residues" evidence="6">
    <location>
        <begin position="147"/>
        <end position="156"/>
    </location>
</feature>
<feature type="modified residue" description="Phosphoserine" evidence="3">
    <location>
        <position position="18"/>
    </location>
</feature>
<organism>
    <name type="scientific">Sus scrofa</name>
    <name type="common">Pig</name>
    <dbReference type="NCBI Taxonomy" id="9823"/>
    <lineage>
        <taxon>Eukaryota</taxon>
        <taxon>Metazoa</taxon>
        <taxon>Chordata</taxon>
        <taxon>Craniata</taxon>
        <taxon>Vertebrata</taxon>
        <taxon>Euteleostomi</taxon>
        <taxon>Mammalia</taxon>
        <taxon>Eutheria</taxon>
        <taxon>Laurasiatheria</taxon>
        <taxon>Artiodactyla</taxon>
        <taxon>Suina</taxon>
        <taxon>Suidae</taxon>
        <taxon>Sus</taxon>
    </lineage>
</organism>
<keyword id="KW-0963">Cytoplasm</keyword>
<keyword id="KW-0440">LIM domain</keyword>
<keyword id="KW-0479">Metal-binding</keyword>
<keyword id="KW-0597">Phosphoprotein</keyword>
<keyword id="KW-1185">Reference proteome</keyword>
<keyword id="KW-0862">Zinc</keyword>